<sequence>MKQTWRWYGPNDPVTLSDVRQAGATGVVTALHHIPNGEIWSVDEIQKRKAIVEEAGLEWSVVESVPIHEDIKTHTGQYDLWIKNYQQTLRNLAQCGIYTVCYNFMPVLDWTRTDLEYVLPDGSKALRFDQIEFAAFELHILKRPGAEADYTAEEIAQAERRFATMSEEDKARLTRNIIAGLPGAEEGYTLEQFRQHLATYKDIDKAKLREHFAYFLKAIIPVADEVGVRMAVHPDDPPRPILGLPRIVSTIEDMQWMVETVNSMANGFTMCTGSYGVRADNDLVDMIKQFGPRIYFTHLRSTLREENPKTFHEAAHLHGDVDMYEVVKAIVEEEHRRKAEGSDDLIPMRPDHGHQMLDDLKKKTNPGYSAIGRLKGLAEVRGVELAIQRAFFSK</sequence>
<organism>
    <name type="scientific">Salmonella paratyphi A (strain ATCC 9150 / SARB42)</name>
    <dbReference type="NCBI Taxonomy" id="295319"/>
    <lineage>
        <taxon>Bacteria</taxon>
        <taxon>Pseudomonadati</taxon>
        <taxon>Pseudomonadota</taxon>
        <taxon>Gammaproteobacteria</taxon>
        <taxon>Enterobacterales</taxon>
        <taxon>Enterobacteriaceae</taxon>
        <taxon>Salmonella</taxon>
    </lineage>
</organism>
<accession>Q5PMP2</accession>
<name>UXUA_SALPA</name>
<reference key="1">
    <citation type="journal article" date="2004" name="Nat. Genet.">
        <title>Comparison of genome degradation in Paratyphi A and Typhi, human-restricted serovars of Salmonella enterica that cause typhoid.</title>
        <authorList>
            <person name="McClelland M."/>
            <person name="Sanderson K.E."/>
            <person name="Clifton S.W."/>
            <person name="Latreille P."/>
            <person name="Porwollik S."/>
            <person name="Sabo A."/>
            <person name="Meyer R."/>
            <person name="Bieri T."/>
            <person name="Ozersky P."/>
            <person name="McLellan M."/>
            <person name="Harkins C.R."/>
            <person name="Wang C."/>
            <person name="Nguyen C."/>
            <person name="Berghoff A."/>
            <person name="Elliott G."/>
            <person name="Kohlberg S."/>
            <person name="Strong C."/>
            <person name="Du F."/>
            <person name="Carter J."/>
            <person name="Kremizki C."/>
            <person name="Layman D."/>
            <person name="Leonard S."/>
            <person name="Sun H."/>
            <person name="Fulton L."/>
            <person name="Nash W."/>
            <person name="Miner T."/>
            <person name="Minx P."/>
            <person name="Delehaunty K."/>
            <person name="Fronick C."/>
            <person name="Magrini V."/>
            <person name="Nhan M."/>
            <person name="Warren W."/>
            <person name="Florea L."/>
            <person name="Spieth J."/>
            <person name="Wilson R.K."/>
        </authorList>
    </citation>
    <scope>NUCLEOTIDE SEQUENCE [LARGE SCALE GENOMIC DNA]</scope>
    <source>
        <strain>ATCC 9150 / SARB42</strain>
    </source>
</reference>
<feature type="chain" id="PRO_0000231055" description="Mannonate dehydratase">
    <location>
        <begin position="1"/>
        <end position="394"/>
    </location>
</feature>
<keyword id="KW-0408">Iron</keyword>
<keyword id="KW-0456">Lyase</keyword>
<keyword id="KW-0464">Manganese</keyword>
<dbReference type="EC" id="4.2.1.8" evidence="1"/>
<dbReference type="EMBL" id="CP000026">
    <property type="protein sequence ID" value="AAV78840.1"/>
    <property type="molecule type" value="Genomic_DNA"/>
</dbReference>
<dbReference type="RefSeq" id="WP_000815491.1">
    <property type="nucleotide sequence ID" value="NC_006511.1"/>
</dbReference>
<dbReference type="SMR" id="Q5PMP2"/>
<dbReference type="KEGG" id="spt:SPA3003"/>
<dbReference type="HOGENOM" id="CLU_058621_2_0_6"/>
<dbReference type="UniPathway" id="UPA00246"/>
<dbReference type="Proteomes" id="UP000008185">
    <property type="component" value="Chromosome"/>
</dbReference>
<dbReference type="GO" id="GO:0008198">
    <property type="term" value="F:ferrous iron binding"/>
    <property type="evidence" value="ECO:0007669"/>
    <property type="project" value="TreeGrafter"/>
</dbReference>
<dbReference type="GO" id="GO:0030145">
    <property type="term" value="F:manganese ion binding"/>
    <property type="evidence" value="ECO:0007669"/>
    <property type="project" value="TreeGrafter"/>
</dbReference>
<dbReference type="GO" id="GO:0008927">
    <property type="term" value="F:mannonate dehydratase activity"/>
    <property type="evidence" value="ECO:0007669"/>
    <property type="project" value="UniProtKB-UniRule"/>
</dbReference>
<dbReference type="GO" id="GO:0042840">
    <property type="term" value="P:D-glucuronate catabolic process"/>
    <property type="evidence" value="ECO:0007669"/>
    <property type="project" value="TreeGrafter"/>
</dbReference>
<dbReference type="FunFam" id="3.20.20.150:FF:000004">
    <property type="entry name" value="Mannonate dehydratase"/>
    <property type="match status" value="1"/>
</dbReference>
<dbReference type="FunFam" id="3.20.20.150:FF:000005">
    <property type="entry name" value="Mannonate dehydratase"/>
    <property type="match status" value="1"/>
</dbReference>
<dbReference type="Gene3D" id="3.20.20.150">
    <property type="entry name" value="Divalent-metal-dependent TIM barrel enzymes"/>
    <property type="match status" value="2"/>
</dbReference>
<dbReference type="HAMAP" id="MF_00106">
    <property type="entry name" value="UxuA"/>
    <property type="match status" value="1"/>
</dbReference>
<dbReference type="InterPro" id="IPR004628">
    <property type="entry name" value="Man_deHydtase"/>
</dbReference>
<dbReference type="InterPro" id="IPR036237">
    <property type="entry name" value="Xyl_isomerase-like_sf"/>
</dbReference>
<dbReference type="NCBIfam" id="NF003027">
    <property type="entry name" value="PRK03906.1"/>
    <property type="match status" value="1"/>
</dbReference>
<dbReference type="NCBIfam" id="TIGR00695">
    <property type="entry name" value="uxuA"/>
    <property type="match status" value="1"/>
</dbReference>
<dbReference type="PANTHER" id="PTHR30387">
    <property type="entry name" value="MANNONATE DEHYDRATASE"/>
    <property type="match status" value="1"/>
</dbReference>
<dbReference type="PANTHER" id="PTHR30387:SF2">
    <property type="entry name" value="MANNONATE DEHYDRATASE"/>
    <property type="match status" value="1"/>
</dbReference>
<dbReference type="Pfam" id="PF03786">
    <property type="entry name" value="UxuA"/>
    <property type="match status" value="1"/>
</dbReference>
<dbReference type="PIRSF" id="PIRSF016049">
    <property type="entry name" value="Man_dehyd"/>
    <property type="match status" value="1"/>
</dbReference>
<dbReference type="SUPFAM" id="SSF51658">
    <property type="entry name" value="Xylose isomerase-like"/>
    <property type="match status" value="1"/>
</dbReference>
<comment type="function">
    <text evidence="1">Catalyzes the dehydration of D-mannonate.</text>
</comment>
<comment type="catalytic activity">
    <reaction evidence="1">
        <text>D-mannonate = 2-dehydro-3-deoxy-D-gluconate + H2O</text>
        <dbReference type="Rhea" id="RHEA:20097"/>
        <dbReference type="ChEBI" id="CHEBI:15377"/>
        <dbReference type="ChEBI" id="CHEBI:17767"/>
        <dbReference type="ChEBI" id="CHEBI:57990"/>
        <dbReference type="EC" id="4.2.1.8"/>
    </reaction>
</comment>
<comment type="cofactor">
    <cofactor evidence="1">
        <name>Fe(2+)</name>
        <dbReference type="ChEBI" id="CHEBI:29033"/>
    </cofactor>
    <cofactor evidence="1">
        <name>Mn(2+)</name>
        <dbReference type="ChEBI" id="CHEBI:29035"/>
    </cofactor>
</comment>
<comment type="pathway">
    <text evidence="1">Carbohydrate metabolism; pentose and glucuronate interconversion.</text>
</comment>
<comment type="similarity">
    <text evidence="1">Belongs to the mannonate dehydratase family.</text>
</comment>
<proteinExistence type="inferred from homology"/>
<protein>
    <recommendedName>
        <fullName evidence="1">Mannonate dehydratase</fullName>
        <ecNumber evidence="1">4.2.1.8</ecNumber>
    </recommendedName>
    <alternativeName>
        <fullName evidence="1">D-mannonate hydro-lyase</fullName>
    </alternativeName>
</protein>
<gene>
    <name evidence="1" type="primary">uxuA</name>
    <name type="ordered locus">SPA3003</name>
</gene>
<evidence type="ECO:0000255" key="1">
    <source>
        <dbReference type="HAMAP-Rule" id="MF_00106"/>
    </source>
</evidence>